<keyword id="KW-1185">Reference proteome</keyword>
<keyword id="KW-0678">Repressor</keyword>
<keyword id="KW-0687">Ribonucleoprotein</keyword>
<keyword id="KW-0689">Ribosomal protein</keyword>
<keyword id="KW-0694">RNA-binding</keyword>
<keyword id="KW-0699">rRNA-binding</keyword>
<keyword id="KW-0810">Translation regulation</keyword>
<keyword id="KW-0820">tRNA-binding</keyword>
<reference key="1">
    <citation type="submission" date="2006-08" db="EMBL/GenBank/DDBJ databases">
        <title>Complete sequence of Alkalilimnicola ehrilichei MLHE-1.</title>
        <authorList>
            <person name="Copeland A."/>
            <person name="Lucas S."/>
            <person name="Lapidus A."/>
            <person name="Barry K."/>
            <person name="Detter J.C."/>
            <person name="Glavina del Rio T."/>
            <person name="Hammon N."/>
            <person name="Israni S."/>
            <person name="Dalin E."/>
            <person name="Tice H."/>
            <person name="Pitluck S."/>
            <person name="Sims D."/>
            <person name="Brettin T."/>
            <person name="Bruce D."/>
            <person name="Han C."/>
            <person name="Tapia R."/>
            <person name="Gilna P."/>
            <person name="Schmutz J."/>
            <person name="Larimer F."/>
            <person name="Land M."/>
            <person name="Hauser L."/>
            <person name="Kyrpides N."/>
            <person name="Mikhailova N."/>
            <person name="Oremland R.S."/>
            <person name="Hoeft S.E."/>
            <person name="Switzer-Blum J."/>
            <person name="Kulp T."/>
            <person name="King G."/>
            <person name="Tabita R."/>
            <person name="Witte B."/>
            <person name="Santini J.M."/>
            <person name="Basu P."/>
            <person name="Hollibaugh J.T."/>
            <person name="Xie G."/>
            <person name="Stolz J.F."/>
            <person name="Richardson P."/>
        </authorList>
    </citation>
    <scope>NUCLEOTIDE SEQUENCE [LARGE SCALE GENOMIC DNA]</scope>
    <source>
        <strain>ATCC BAA-1101 / DSM 17681 / MLHE-1</strain>
    </source>
</reference>
<evidence type="ECO:0000255" key="1">
    <source>
        <dbReference type="HAMAP-Rule" id="MF_01318"/>
    </source>
</evidence>
<evidence type="ECO:0000305" key="2"/>
<protein>
    <recommendedName>
        <fullName evidence="1">Large ribosomal subunit protein uL1</fullName>
    </recommendedName>
    <alternativeName>
        <fullName evidence="2">50S ribosomal protein L1</fullName>
    </alternativeName>
</protein>
<organism>
    <name type="scientific">Alkalilimnicola ehrlichii (strain ATCC BAA-1101 / DSM 17681 / MLHE-1)</name>
    <dbReference type="NCBI Taxonomy" id="187272"/>
    <lineage>
        <taxon>Bacteria</taxon>
        <taxon>Pseudomonadati</taxon>
        <taxon>Pseudomonadota</taxon>
        <taxon>Gammaproteobacteria</taxon>
        <taxon>Chromatiales</taxon>
        <taxon>Ectothiorhodospiraceae</taxon>
        <taxon>Alkalilimnicola</taxon>
    </lineage>
</organism>
<feature type="chain" id="PRO_0000307956" description="Large ribosomal subunit protein uL1">
    <location>
        <begin position="1"/>
        <end position="231"/>
    </location>
</feature>
<accession>Q0ABI5</accession>
<sequence>MARLTKRQKAIREKIDPAQQYPVAEALGLLRELPGAKFTESVEVAVNLGVDPRKSDQIVRGSTVLPNGTGKTVRVAVFAQGDAAEAAKEAGADIVGMDDLAEQVKGGNLDFDVVVAAPDAMGVVGRLGPILGPRGLMPNPKVGTVTPDVAGAVKNAKAGQVRYRTDKGGIIHCAIGKVDFEVEALQQNLQALITDLQKLKPANSKGVYLKKVAVSTTMGPGLAVDLASLET</sequence>
<name>RL1_ALKEH</name>
<comment type="function">
    <text evidence="1">Binds directly to 23S rRNA. The L1 stalk is quite mobile in the ribosome, and is involved in E site tRNA release.</text>
</comment>
<comment type="function">
    <text evidence="1">Protein L1 is also a translational repressor protein, it controls the translation of the L11 operon by binding to its mRNA.</text>
</comment>
<comment type="subunit">
    <text evidence="1">Part of the 50S ribosomal subunit.</text>
</comment>
<comment type="similarity">
    <text evidence="1">Belongs to the universal ribosomal protein uL1 family.</text>
</comment>
<dbReference type="EMBL" id="CP000453">
    <property type="protein sequence ID" value="ABI55802.1"/>
    <property type="molecule type" value="Genomic_DNA"/>
</dbReference>
<dbReference type="RefSeq" id="WP_011628198.1">
    <property type="nucleotide sequence ID" value="NC_008340.1"/>
</dbReference>
<dbReference type="SMR" id="Q0ABI5"/>
<dbReference type="KEGG" id="aeh:Mlg_0448"/>
<dbReference type="eggNOG" id="COG0081">
    <property type="taxonomic scope" value="Bacteria"/>
</dbReference>
<dbReference type="HOGENOM" id="CLU_062853_0_0_6"/>
<dbReference type="OrthoDB" id="9803740at2"/>
<dbReference type="Proteomes" id="UP000001962">
    <property type="component" value="Chromosome"/>
</dbReference>
<dbReference type="GO" id="GO:0022625">
    <property type="term" value="C:cytosolic large ribosomal subunit"/>
    <property type="evidence" value="ECO:0007669"/>
    <property type="project" value="TreeGrafter"/>
</dbReference>
<dbReference type="GO" id="GO:0019843">
    <property type="term" value="F:rRNA binding"/>
    <property type="evidence" value="ECO:0007669"/>
    <property type="project" value="UniProtKB-UniRule"/>
</dbReference>
<dbReference type="GO" id="GO:0003735">
    <property type="term" value="F:structural constituent of ribosome"/>
    <property type="evidence" value="ECO:0007669"/>
    <property type="project" value="InterPro"/>
</dbReference>
<dbReference type="GO" id="GO:0000049">
    <property type="term" value="F:tRNA binding"/>
    <property type="evidence" value="ECO:0007669"/>
    <property type="project" value="UniProtKB-KW"/>
</dbReference>
<dbReference type="GO" id="GO:0006417">
    <property type="term" value="P:regulation of translation"/>
    <property type="evidence" value="ECO:0007669"/>
    <property type="project" value="UniProtKB-KW"/>
</dbReference>
<dbReference type="GO" id="GO:0006412">
    <property type="term" value="P:translation"/>
    <property type="evidence" value="ECO:0007669"/>
    <property type="project" value="UniProtKB-UniRule"/>
</dbReference>
<dbReference type="CDD" id="cd00403">
    <property type="entry name" value="Ribosomal_L1"/>
    <property type="match status" value="1"/>
</dbReference>
<dbReference type="FunFam" id="3.40.50.790:FF:000001">
    <property type="entry name" value="50S ribosomal protein L1"/>
    <property type="match status" value="1"/>
</dbReference>
<dbReference type="Gene3D" id="3.30.190.20">
    <property type="match status" value="1"/>
</dbReference>
<dbReference type="Gene3D" id="3.40.50.790">
    <property type="match status" value="1"/>
</dbReference>
<dbReference type="HAMAP" id="MF_01318_B">
    <property type="entry name" value="Ribosomal_uL1_B"/>
    <property type="match status" value="1"/>
</dbReference>
<dbReference type="InterPro" id="IPR005878">
    <property type="entry name" value="Ribosom_uL1_bac-type"/>
</dbReference>
<dbReference type="InterPro" id="IPR002143">
    <property type="entry name" value="Ribosomal_uL1"/>
</dbReference>
<dbReference type="InterPro" id="IPR023674">
    <property type="entry name" value="Ribosomal_uL1-like"/>
</dbReference>
<dbReference type="InterPro" id="IPR028364">
    <property type="entry name" value="Ribosomal_uL1/biogenesis"/>
</dbReference>
<dbReference type="InterPro" id="IPR016095">
    <property type="entry name" value="Ribosomal_uL1_3-a/b-sand"/>
</dbReference>
<dbReference type="InterPro" id="IPR023673">
    <property type="entry name" value="Ribosomal_uL1_CS"/>
</dbReference>
<dbReference type="NCBIfam" id="TIGR01169">
    <property type="entry name" value="rplA_bact"/>
    <property type="match status" value="1"/>
</dbReference>
<dbReference type="PANTHER" id="PTHR36427">
    <property type="entry name" value="54S RIBOSOMAL PROTEIN L1, MITOCHONDRIAL"/>
    <property type="match status" value="1"/>
</dbReference>
<dbReference type="PANTHER" id="PTHR36427:SF3">
    <property type="entry name" value="LARGE RIBOSOMAL SUBUNIT PROTEIN UL1M"/>
    <property type="match status" value="1"/>
</dbReference>
<dbReference type="Pfam" id="PF00687">
    <property type="entry name" value="Ribosomal_L1"/>
    <property type="match status" value="1"/>
</dbReference>
<dbReference type="PIRSF" id="PIRSF002155">
    <property type="entry name" value="Ribosomal_L1"/>
    <property type="match status" value="1"/>
</dbReference>
<dbReference type="SUPFAM" id="SSF56808">
    <property type="entry name" value="Ribosomal protein L1"/>
    <property type="match status" value="1"/>
</dbReference>
<dbReference type="PROSITE" id="PS01199">
    <property type="entry name" value="RIBOSOMAL_L1"/>
    <property type="match status" value="1"/>
</dbReference>
<proteinExistence type="inferred from homology"/>
<gene>
    <name evidence="1" type="primary">rplA</name>
    <name type="ordered locus">Mlg_0448</name>
</gene>